<organism>
    <name type="scientific">Roseiflexus sp. (strain RS-1)</name>
    <dbReference type="NCBI Taxonomy" id="357808"/>
    <lineage>
        <taxon>Bacteria</taxon>
        <taxon>Bacillati</taxon>
        <taxon>Chloroflexota</taxon>
        <taxon>Chloroflexia</taxon>
        <taxon>Chloroflexales</taxon>
        <taxon>Roseiflexineae</taxon>
        <taxon>Roseiflexaceae</taxon>
        <taxon>Roseiflexus</taxon>
    </lineage>
</organism>
<reference key="1">
    <citation type="submission" date="2007-04" db="EMBL/GenBank/DDBJ databases">
        <title>Complete sequence of Roseiflexus sp. RS-1.</title>
        <authorList>
            <consortium name="US DOE Joint Genome Institute"/>
            <person name="Copeland A."/>
            <person name="Lucas S."/>
            <person name="Lapidus A."/>
            <person name="Barry K."/>
            <person name="Detter J.C."/>
            <person name="Glavina del Rio T."/>
            <person name="Hammon N."/>
            <person name="Israni S."/>
            <person name="Dalin E."/>
            <person name="Tice H."/>
            <person name="Pitluck S."/>
            <person name="Chertkov O."/>
            <person name="Brettin T."/>
            <person name="Bruce D."/>
            <person name="Han C."/>
            <person name="Schmutz J."/>
            <person name="Larimer F."/>
            <person name="Land M."/>
            <person name="Hauser L."/>
            <person name="Kyrpides N."/>
            <person name="Mikhailova N."/>
            <person name="Bryant D.A."/>
            <person name="Richardson P."/>
        </authorList>
    </citation>
    <scope>NUCLEOTIDE SEQUENCE [LARGE SCALE GENOMIC DNA]</scope>
    <source>
        <strain>RS-1</strain>
    </source>
</reference>
<proteinExistence type="inferred from homology"/>
<evidence type="ECO:0000255" key="1">
    <source>
        <dbReference type="HAMAP-Rule" id="MF_00151"/>
    </source>
</evidence>
<gene>
    <name evidence="1" type="primary">coaD</name>
    <name type="ordered locus">RoseRS_2610</name>
</gene>
<sequence>MTIAVYPGSFDPVTNGHLDIAARASRIFDTVIMAVFDRPNKQLLFSTEERVALLRESTRHLPRVKVDTYSTLTVDYVRSVGASVIVRGMRAVGDFEAEFQLAQINQTLAPDIDIVLFMASHRYTFFSSSTVREIASLGGDVSWLVPGPVVEALKRAYGRR</sequence>
<name>COAD_ROSS1</name>
<dbReference type="EC" id="2.7.7.3" evidence="1"/>
<dbReference type="EMBL" id="CP000686">
    <property type="protein sequence ID" value="ABQ90986.1"/>
    <property type="molecule type" value="Genomic_DNA"/>
</dbReference>
<dbReference type="RefSeq" id="WP_011957330.1">
    <property type="nucleotide sequence ID" value="NC_009523.1"/>
</dbReference>
<dbReference type="SMR" id="A5UWI3"/>
<dbReference type="STRING" id="357808.RoseRS_2610"/>
<dbReference type="KEGG" id="rrs:RoseRS_2610"/>
<dbReference type="eggNOG" id="COG0669">
    <property type="taxonomic scope" value="Bacteria"/>
</dbReference>
<dbReference type="HOGENOM" id="CLU_100149_0_1_0"/>
<dbReference type="OrthoDB" id="9806661at2"/>
<dbReference type="UniPathway" id="UPA00241">
    <property type="reaction ID" value="UER00355"/>
</dbReference>
<dbReference type="Proteomes" id="UP000006554">
    <property type="component" value="Chromosome"/>
</dbReference>
<dbReference type="GO" id="GO:0005737">
    <property type="term" value="C:cytoplasm"/>
    <property type="evidence" value="ECO:0007669"/>
    <property type="project" value="UniProtKB-SubCell"/>
</dbReference>
<dbReference type="GO" id="GO:0005524">
    <property type="term" value="F:ATP binding"/>
    <property type="evidence" value="ECO:0007669"/>
    <property type="project" value="UniProtKB-KW"/>
</dbReference>
<dbReference type="GO" id="GO:0004595">
    <property type="term" value="F:pantetheine-phosphate adenylyltransferase activity"/>
    <property type="evidence" value="ECO:0007669"/>
    <property type="project" value="UniProtKB-UniRule"/>
</dbReference>
<dbReference type="GO" id="GO:0015937">
    <property type="term" value="P:coenzyme A biosynthetic process"/>
    <property type="evidence" value="ECO:0007669"/>
    <property type="project" value="UniProtKB-UniRule"/>
</dbReference>
<dbReference type="CDD" id="cd02163">
    <property type="entry name" value="PPAT"/>
    <property type="match status" value="1"/>
</dbReference>
<dbReference type="Gene3D" id="3.40.50.620">
    <property type="entry name" value="HUPs"/>
    <property type="match status" value="1"/>
</dbReference>
<dbReference type="HAMAP" id="MF_00151">
    <property type="entry name" value="PPAT_bact"/>
    <property type="match status" value="1"/>
</dbReference>
<dbReference type="InterPro" id="IPR004821">
    <property type="entry name" value="Cyt_trans-like"/>
</dbReference>
<dbReference type="InterPro" id="IPR001980">
    <property type="entry name" value="PPAT"/>
</dbReference>
<dbReference type="InterPro" id="IPR014729">
    <property type="entry name" value="Rossmann-like_a/b/a_fold"/>
</dbReference>
<dbReference type="NCBIfam" id="TIGR01510">
    <property type="entry name" value="coaD_prev_kdtB"/>
    <property type="match status" value="1"/>
</dbReference>
<dbReference type="NCBIfam" id="TIGR00125">
    <property type="entry name" value="cyt_tran_rel"/>
    <property type="match status" value="1"/>
</dbReference>
<dbReference type="PANTHER" id="PTHR21342">
    <property type="entry name" value="PHOSPHOPANTETHEINE ADENYLYLTRANSFERASE"/>
    <property type="match status" value="1"/>
</dbReference>
<dbReference type="PANTHER" id="PTHR21342:SF1">
    <property type="entry name" value="PHOSPHOPANTETHEINE ADENYLYLTRANSFERASE"/>
    <property type="match status" value="1"/>
</dbReference>
<dbReference type="Pfam" id="PF01467">
    <property type="entry name" value="CTP_transf_like"/>
    <property type="match status" value="1"/>
</dbReference>
<dbReference type="PRINTS" id="PR01020">
    <property type="entry name" value="LPSBIOSNTHSS"/>
</dbReference>
<dbReference type="SUPFAM" id="SSF52374">
    <property type="entry name" value="Nucleotidylyl transferase"/>
    <property type="match status" value="1"/>
</dbReference>
<keyword id="KW-0067">ATP-binding</keyword>
<keyword id="KW-0173">Coenzyme A biosynthesis</keyword>
<keyword id="KW-0963">Cytoplasm</keyword>
<keyword id="KW-0460">Magnesium</keyword>
<keyword id="KW-0547">Nucleotide-binding</keyword>
<keyword id="KW-0548">Nucleotidyltransferase</keyword>
<keyword id="KW-0808">Transferase</keyword>
<accession>A5UWI3</accession>
<comment type="function">
    <text evidence="1">Reversibly transfers an adenylyl group from ATP to 4'-phosphopantetheine, yielding dephospho-CoA (dPCoA) and pyrophosphate.</text>
</comment>
<comment type="catalytic activity">
    <reaction evidence="1">
        <text>(R)-4'-phosphopantetheine + ATP + H(+) = 3'-dephospho-CoA + diphosphate</text>
        <dbReference type="Rhea" id="RHEA:19801"/>
        <dbReference type="ChEBI" id="CHEBI:15378"/>
        <dbReference type="ChEBI" id="CHEBI:30616"/>
        <dbReference type="ChEBI" id="CHEBI:33019"/>
        <dbReference type="ChEBI" id="CHEBI:57328"/>
        <dbReference type="ChEBI" id="CHEBI:61723"/>
        <dbReference type="EC" id="2.7.7.3"/>
    </reaction>
</comment>
<comment type="cofactor">
    <cofactor evidence="1">
        <name>Mg(2+)</name>
        <dbReference type="ChEBI" id="CHEBI:18420"/>
    </cofactor>
</comment>
<comment type="pathway">
    <text evidence="1">Cofactor biosynthesis; coenzyme A biosynthesis; CoA from (R)-pantothenate: step 4/5.</text>
</comment>
<comment type="subunit">
    <text evidence="1">Homohexamer.</text>
</comment>
<comment type="subcellular location">
    <subcellularLocation>
        <location evidence="1">Cytoplasm</location>
    </subcellularLocation>
</comment>
<comment type="similarity">
    <text evidence="1">Belongs to the bacterial CoaD family.</text>
</comment>
<protein>
    <recommendedName>
        <fullName evidence="1">Phosphopantetheine adenylyltransferase</fullName>
        <ecNumber evidence="1">2.7.7.3</ecNumber>
    </recommendedName>
    <alternativeName>
        <fullName evidence="1">Dephospho-CoA pyrophosphorylase</fullName>
    </alternativeName>
    <alternativeName>
        <fullName evidence="1">Pantetheine-phosphate adenylyltransferase</fullName>
        <shortName evidence="1">PPAT</shortName>
    </alternativeName>
</protein>
<feature type="chain" id="PRO_1000011224" description="Phosphopantetheine adenylyltransferase">
    <location>
        <begin position="1"/>
        <end position="160"/>
    </location>
</feature>
<feature type="binding site" evidence="1">
    <location>
        <begin position="9"/>
        <end position="10"/>
    </location>
    <ligand>
        <name>ATP</name>
        <dbReference type="ChEBI" id="CHEBI:30616"/>
    </ligand>
</feature>
<feature type="binding site" evidence="1">
    <location>
        <position position="9"/>
    </location>
    <ligand>
        <name>substrate</name>
    </ligand>
</feature>
<feature type="binding site" evidence="1">
    <location>
        <position position="17"/>
    </location>
    <ligand>
        <name>ATP</name>
        <dbReference type="ChEBI" id="CHEBI:30616"/>
    </ligand>
</feature>
<feature type="binding site" evidence="1">
    <location>
        <position position="41"/>
    </location>
    <ligand>
        <name>substrate</name>
    </ligand>
</feature>
<feature type="binding site" evidence="1">
    <location>
        <position position="73"/>
    </location>
    <ligand>
        <name>substrate</name>
    </ligand>
</feature>
<feature type="binding site" evidence="1">
    <location>
        <position position="87"/>
    </location>
    <ligand>
        <name>substrate</name>
    </ligand>
</feature>
<feature type="binding site" evidence="1">
    <location>
        <begin position="88"/>
        <end position="90"/>
    </location>
    <ligand>
        <name>ATP</name>
        <dbReference type="ChEBI" id="CHEBI:30616"/>
    </ligand>
</feature>
<feature type="binding site" evidence="1">
    <location>
        <position position="98"/>
    </location>
    <ligand>
        <name>ATP</name>
        <dbReference type="ChEBI" id="CHEBI:30616"/>
    </ligand>
</feature>
<feature type="binding site" evidence="1">
    <location>
        <begin position="123"/>
        <end position="129"/>
    </location>
    <ligand>
        <name>ATP</name>
        <dbReference type="ChEBI" id="CHEBI:30616"/>
    </ligand>
</feature>
<feature type="site" description="Transition state stabilizer" evidence="1">
    <location>
        <position position="17"/>
    </location>
</feature>